<organism>
    <name type="scientific">Microchaete diplosiphon</name>
    <name type="common">Fremyella diplosiphon</name>
    <dbReference type="NCBI Taxonomy" id="1197"/>
    <lineage>
        <taxon>Bacteria</taxon>
        <taxon>Bacillati</taxon>
        <taxon>Cyanobacteriota</taxon>
        <taxon>Cyanophyceae</taxon>
        <taxon>Nostocales</taxon>
        <taxon>Rivulariaceae</taxon>
        <taxon>Microchaete</taxon>
    </lineage>
</organism>
<reference key="1">
    <citation type="journal article" date="1988" name="Nucleic Acids Res.">
        <title>Complete nucleotide sequence of the red-light specific set of phycocyanin genes from the cyanobacterium Calothrix PCC 7601.</title>
        <authorList>
            <person name="Capuano V."/>
            <person name="Mazel D."/>
            <person name="Tandeau de Marsac N."/>
            <person name="Houmard J."/>
        </authorList>
    </citation>
    <scope>NUCLEOTIDE SEQUENCE [GENOMIC DNA]</scope>
    <source>
        <strain>UTEX 481 / PCC 7601 / SAG 1410-2</strain>
    </source>
</reference>
<reference key="2">
    <citation type="journal article" date="1988" name="J. Mol. Biol.">
        <title>Molecular characterization and evolution of sequences encoding light-harvesting components in the chromatically adapting cyanobacterium Fremyella diplosiphon.</title>
        <authorList>
            <person name="Conley P.B."/>
            <person name="Lemaux P.G."/>
            <person name="Grossman A."/>
        </authorList>
    </citation>
    <scope>NUCLEOTIDE SEQUENCE [GENOMIC DNA]</scope>
</reference>
<reference key="3">
    <citation type="journal article" date="1985" name="Science">
        <title>Cyanobacterial light-harvesting complex subunits encoded in two red light-induced transcripts.</title>
        <authorList>
            <person name="Conley P.B."/>
            <person name="Lemaux P.G."/>
            <person name="Grossman A.R."/>
        </authorList>
    </citation>
    <scope>NUCLEOTIDE SEQUENCE [GENOMIC DNA] OF 1-19</scope>
</reference>
<reference key="4">
    <citation type="journal article" date="1991" name="Plant Cell">
        <title>Hormogonium Differentiation in the Cyanobacterium Calothrix: A Photoregulated Developmental Process.</title>
        <authorList>
            <person name="Damerval T."/>
            <person name="Guglielmi G."/>
            <person name="Houmard J."/>
            <person name="De Marsac N.T."/>
        </authorList>
    </citation>
    <scope>INDUCTION</scope>
    <source>
        <strain>UTEX 481 / PCC 7601 / SAG 1410-2</strain>
    </source>
</reference>
<sequence length="162" mass="17466">MKTPLTEAVATADSQGRFLSSTELQVAFGRFRQASASLDAAKALSSKANSLAQGAVNAVYQKFPYTTQMQGKNFASDQRGKDKCARDIGYYIRIVTYCLVAGGTGPLDDYLIGGLAEINRTFDLSPSWYVEALKYIKANHGLSGDPAVEANSYIDYAINALS</sequence>
<dbReference type="EMBL" id="X06451">
    <property type="protein sequence ID" value="CAA29751.1"/>
    <property type="molecule type" value="Genomic_DNA"/>
</dbReference>
<dbReference type="EMBL" id="X07012">
    <property type="protein sequence ID" value="CAA30062.1"/>
    <property type="molecule type" value="Genomic_DNA"/>
</dbReference>
<dbReference type="EMBL" id="M36276">
    <property type="protein sequence ID" value="AAA23290.1"/>
    <property type="molecule type" value="Genomic_DNA"/>
</dbReference>
<dbReference type="EMBL" id="M11929">
    <property type="protein sequence ID" value="AAA24889.1"/>
    <property type="molecule type" value="Genomic_DNA"/>
</dbReference>
<dbReference type="SMR" id="P08040"/>
<dbReference type="GO" id="GO:0030089">
    <property type="term" value="C:phycobilisome"/>
    <property type="evidence" value="ECO:0007669"/>
    <property type="project" value="UniProtKB-KW"/>
</dbReference>
<dbReference type="GO" id="GO:0031676">
    <property type="term" value="C:plasma membrane-derived thylakoid membrane"/>
    <property type="evidence" value="ECO:0007669"/>
    <property type="project" value="UniProtKB-SubCell"/>
</dbReference>
<dbReference type="GO" id="GO:0015979">
    <property type="term" value="P:photosynthesis"/>
    <property type="evidence" value="ECO:0007669"/>
    <property type="project" value="UniProtKB-KW"/>
</dbReference>
<dbReference type="CDD" id="cd14770">
    <property type="entry name" value="PC-PEC_alpha"/>
    <property type="match status" value="1"/>
</dbReference>
<dbReference type="Gene3D" id="1.10.490.20">
    <property type="entry name" value="Phycocyanins"/>
    <property type="match status" value="1"/>
</dbReference>
<dbReference type="InterPro" id="IPR009050">
    <property type="entry name" value="Globin-like_sf"/>
</dbReference>
<dbReference type="InterPro" id="IPR012128">
    <property type="entry name" value="Phycobilisome_asu/bsu"/>
</dbReference>
<dbReference type="InterPro" id="IPR038719">
    <property type="entry name" value="Phycobilisome_asu/bsu_sf"/>
</dbReference>
<dbReference type="InterPro" id="IPR006246">
    <property type="entry name" value="Phycocyanin_a"/>
</dbReference>
<dbReference type="NCBIfam" id="TIGR01338">
    <property type="entry name" value="phycocy_alpha"/>
    <property type="match status" value="1"/>
</dbReference>
<dbReference type="PANTHER" id="PTHR34011:SF4">
    <property type="entry name" value="C-PHYCOCYANIN ALPHA SUBUNIT"/>
    <property type="match status" value="1"/>
</dbReference>
<dbReference type="PANTHER" id="PTHR34011">
    <property type="entry name" value="PHYCOBILISOME 32.1 KDA LINKER POLYPEPTIDE, PHYCOCYANIN-ASSOCIATED, ROD 2-RELATED"/>
    <property type="match status" value="1"/>
</dbReference>
<dbReference type="Pfam" id="PF00502">
    <property type="entry name" value="Phycobilisome"/>
    <property type="match status" value="1"/>
</dbReference>
<dbReference type="PIRSF" id="PIRSF000081">
    <property type="entry name" value="Phycocyanin"/>
    <property type="match status" value="1"/>
</dbReference>
<dbReference type="SUPFAM" id="SSF46458">
    <property type="entry name" value="Globin-like"/>
    <property type="match status" value="1"/>
</dbReference>
<protein>
    <recommendedName>
        <fullName>C-phycocyanin-2 alpha subunit</fullName>
    </recommendedName>
</protein>
<gene>
    <name type="primary">cpcA2</name>
</gene>
<name>PHCA2_MICDP</name>
<evidence type="ECO:0000250" key="1"/>
<evidence type="ECO:0000250" key="2">
    <source>
        <dbReference type="UniProtKB" id="P13530"/>
    </source>
</evidence>
<evidence type="ECO:0000269" key="3">
    <source>
    </source>
</evidence>
<evidence type="ECO:0000305" key="4"/>
<comment type="function">
    <text>Light-harvesting photosynthetic bile pigment-protein from the phycobiliprotein complex (phycobilisome, PBS). Phycocyanin is the major phycobiliprotein in the PBS rod.</text>
</comment>
<comment type="subunit">
    <text evidence="2">Heterodimer of an alpha and a beta subunit, which further assembles into trimers and the trimers into hexamers.</text>
</comment>
<comment type="subcellular location">
    <subcellularLocation>
        <location evidence="1">Cellular thylakoid membrane</location>
        <topology evidence="1">Peripheral membrane protein</topology>
        <orientation evidence="1">Cytoplasmic side</orientation>
    </subcellularLocation>
    <text evidence="1">Part of the phycobilisome rod.</text>
</comment>
<comment type="induction">
    <text evidence="3">Phycocyanin-2 is expressed in red but not in green light (inducible phycocyanin).</text>
</comment>
<comment type="PTM">
    <text evidence="2">Contains one covalently linked bilin chromophore.</text>
</comment>
<comment type="similarity">
    <text evidence="4">Belongs to the phycobiliprotein family.</text>
</comment>
<feature type="chain" id="PRO_0000199114" description="C-phycocyanin-2 alpha subunit">
    <location>
        <begin position="1"/>
        <end position="162"/>
    </location>
</feature>
<feature type="binding site" description="covalent" evidence="2">
    <location>
        <position position="84"/>
    </location>
    <ligand>
        <name>(2R,3E)-phycocyanobilin</name>
        <dbReference type="ChEBI" id="CHEBI:85275"/>
    </ligand>
</feature>
<feature type="sequence conflict" description="In Ref. 2; CAA30062." evidence="4" ref="2">
    <original>A</original>
    <variation>G</variation>
    <location>
        <position position="8"/>
    </location>
</feature>
<feature type="sequence conflict" description="In Ref. 2; CAA30062." evidence="4" ref="2">
    <original>AV</original>
    <variation>TA</variation>
    <location>
        <begin position="55"/>
        <end position="56"/>
    </location>
</feature>
<feature type="sequence conflict" description="In Ref. 2; CAA30062." evidence="4" ref="2">
    <original>A</original>
    <variation>V</variation>
    <location>
        <position position="150"/>
    </location>
</feature>
<accession>P08040</accession>
<keyword id="KW-0042">Antenna complex</keyword>
<keyword id="KW-0089">Bile pigment</keyword>
<keyword id="KW-0157">Chromophore</keyword>
<keyword id="KW-0249">Electron transport</keyword>
<keyword id="KW-0472">Membrane</keyword>
<keyword id="KW-0602">Photosynthesis</keyword>
<keyword id="KW-0605">Phycobilisome</keyword>
<keyword id="KW-0793">Thylakoid</keyword>
<keyword id="KW-0813">Transport</keyword>
<proteinExistence type="evidence at transcript level"/>